<name>ATPA_SYNP1</name>
<keyword id="KW-0066">ATP synthesis</keyword>
<keyword id="KW-0067">ATP-binding</keyword>
<keyword id="KW-0139">CF(1)</keyword>
<keyword id="KW-0903">Direct protein sequencing</keyword>
<keyword id="KW-0375">Hydrogen ion transport</keyword>
<keyword id="KW-0406">Ion transport</keyword>
<keyword id="KW-0472">Membrane</keyword>
<keyword id="KW-0547">Nucleotide-binding</keyword>
<keyword id="KW-0793">Thylakoid</keyword>
<keyword id="KW-1278">Translocase</keyword>
<keyword id="KW-0813">Transport</keyword>
<gene>
    <name evidence="2" type="primary">atpA</name>
</gene>
<reference key="1">
    <citation type="journal article" date="1993" name="Biochem. J.">
        <title>Organization and sequences of genes for the subunits of ATP synthase in the thermophilic cyanobacterium Synechococcus 6716.</title>
        <authorList>
            <person name="van Walraven H.S."/>
            <person name="Lutter R."/>
            <person name="Walker J.E."/>
        </authorList>
    </citation>
    <scope>NUCLEOTIDE SEQUENCE [GENOMIC DNA]</scope>
    <scope>PROTEIN SEQUENCE OF 2-9</scope>
</reference>
<protein>
    <recommendedName>
        <fullName evidence="2">ATP synthase subunit alpha</fullName>
        <ecNumber evidence="2">7.1.2.2</ecNumber>
    </recommendedName>
    <alternativeName>
        <fullName evidence="2">ATP synthase F1 sector subunit alpha</fullName>
    </alternativeName>
    <alternativeName>
        <fullName evidence="2">F-ATPase subunit alpha</fullName>
    </alternativeName>
</protein>
<sequence>MVSIRPDEISSIIRQQIEQYEQSINVDNVGTVLQVGDGIARVYGLDKVMASELVEFEDGTVGIALNLEEDNVGVVLMGAGLGIEEGSTVRATGKIASVPVGEAVIGRVVDALMRPIDGKGEIHATATRLLESPAPGIVQRKSVCEPLQTGITAIDAMIPIGRGQRELIIGDRQTGKTAVAIDTILNQKGQDVICVYVAIGQKASSVAQVVNVLRERGALDYTIVVAANASDPAALQYLAPYTGASIAEYFMYQGKHTLVIYDDLSKQAQAYRQMSLLLRRPPGREAYPGDVFYLHSRLLERAAKLNDALGGGSMTALPIVETQAGDVSAYIPTNVISITDGQIFLSSDLFNAGLRPAINAGISVSRVGSAAQIKAMKQVAGKLKLELAQFDELQAFAQFASDLDKATQNQLARGQRLREILKQPQYSPIPVEYQVATIYAGTNGYLDDIPVEAVAKFVAGLRDYLATSKPQYGEAVRSSQKLDETAEALLKEAIAEYKAGFTA</sequence>
<proteinExistence type="evidence at protein level"/>
<evidence type="ECO:0000250" key="1"/>
<evidence type="ECO:0000255" key="2">
    <source>
        <dbReference type="HAMAP-Rule" id="MF_01346"/>
    </source>
</evidence>
<evidence type="ECO:0000269" key="3">
    <source>
    </source>
</evidence>
<dbReference type="EC" id="7.1.2.2" evidence="2"/>
<dbReference type="EMBL" id="X70431">
    <property type="protein sequence ID" value="CAA49875.1"/>
    <property type="molecule type" value="Genomic_DNA"/>
</dbReference>
<dbReference type="SMR" id="Q05372"/>
<dbReference type="GO" id="GO:0031676">
    <property type="term" value="C:plasma membrane-derived thylakoid membrane"/>
    <property type="evidence" value="ECO:0007669"/>
    <property type="project" value="UniProtKB-SubCell"/>
</dbReference>
<dbReference type="GO" id="GO:0045259">
    <property type="term" value="C:proton-transporting ATP synthase complex"/>
    <property type="evidence" value="ECO:0007669"/>
    <property type="project" value="UniProtKB-KW"/>
</dbReference>
<dbReference type="GO" id="GO:0043531">
    <property type="term" value="F:ADP binding"/>
    <property type="evidence" value="ECO:0007669"/>
    <property type="project" value="TreeGrafter"/>
</dbReference>
<dbReference type="GO" id="GO:0005524">
    <property type="term" value="F:ATP binding"/>
    <property type="evidence" value="ECO:0007669"/>
    <property type="project" value="UniProtKB-UniRule"/>
</dbReference>
<dbReference type="GO" id="GO:0046933">
    <property type="term" value="F:proton-transporting ATP synthase activity, rotational mechanism"/>
    <property type="evidence" value="ECO:0007669"/>
    <property type="project" value="UniProtKB-UniRule"/>
</dbReference>
<dbReference type="CDD" id="cd18113">
    <property type="entry name" value="ATP-synt_F1_alpha_C"/>
    <property type="match status" value="1"/>
</dbReference>
<dbReference type="CDD" id="cd18116">
    <property type="entry name" value="ATP-synt_F1_alpha_N"/>
    <property type="match status" value="1"/>
</dbReference>
<dbReference type="CDD" id="cd01132">
    <property type="entry name" value="F1-ATPase_alpha_CD"/>
    <property type="match status" value="1"/>
</dbReference>
<dbReference type="FunFam" id="1.20.150.20:FF:000001">
    <property type="entry name" value="ATP synthase subunit alpha"/>
    <property type="match status" value="1"/>
</dbReference>
<dbReference type="FunFam" id="2.40.30.20:FF:000001">
    <property type="entry name" value="ATP synthase subunit alpha"/>
    <property type="match status" value="1"/>
</dbReference>
<dbReference type="FunFam" id="3.40.50.300:FF:000002">
    <property type="entry name" value="ATP synthase subunit alpha"/>
    <property type="match status" value="1"/>
</dbReference>
<dbReference type="Gene3D" id="2.40.30.20">
    <property type="match status" value="1"/>
</dbReference>
<dbReference type="Gene3D" id="1.20.150.20">
    <property type="entry name" value="ATP synthase alpha/beta chain, C-terminal domain"/>
    <property type="match status" value="1"/>
</dbReference>
<dbReference type="Gene3D" id="3.40.50.300">
    <property type="entry name" value="P-loop containing nucleotide triphosphate hydrolases"/>
    <property type="match status" value="1"/>
</dbReference>
<dbReference type="HAMAP" id="MF_01346">
    <property type="entry name" value="ATP_synth_alpha_bact"/>
    <property type="match status" value="1"/>
</dbReference>
<dbReference type="InterPro" id="IPR023366">
    <property type="entry name" value="ATP_synth_asu-like_sf"/>
</dbReference>
<dbReference type="InterPro" id="IPR000793">
    <property type="entry name" value="ATP_synth_asu_C"/>
</dbReference>
<dbReference type="InterPro" id="IPR038376">
    <property type="entry name" value="ATP_synth_asu_C_sf"/>
</dbReference>
<dbReference type="InterPro" id="IPR033732">
    <property type="entry name" value="ATP_synth_F1_a_nt-bd_dom"/>
</dbReference>
<dbReference type="InterPro" id="IPR005294">
    <property type="entry name" value="ATP_synth_F1_asu"/>
</dbReference>
<dbReference type="InterPro" id="IPR020003">
    <property type="entry name" value="ATPase_a/bsu_AS"/>
</dbReference>
<dbReference type="InterPro" id="IPR004100">
    <property type="entry name" value="ATPase_F1/V1/A1_a/bsu_N"/>
</dbReference>
<dbReference type="InterPro" id="IPR036121">
    <property type="entry name" value="ATPase_F1/V1/A1_a/bsu_N_sf"/>
</dbReference>
<dbReference type="InterPro" id="IPR000194">
    <property type="entry name" value="ATPase_F1/V1/A1_a/bsu_nucl-bd"/>
</dbReference>
<dbReference type="InterPro" id="IPR027417">
    <property type="entry name" value="P-loop_NTPase"/>
</dbReference>
<dbReference type="NCBIfam" id="TIGR00962">
    <property type="entry name" value="atpA"/>
    <property type="match status" value="1"/>
</dbReference>
<dbReference type="NCBIfam" id="NF009884">
    <property type="entry name" value="PRK13343.1"/>
    <property type="match status" value="1"/>
</dbReference>
<dbReference type="PANTHER" id="PTHR48082">
    <property type="entry name" value="ATP SYNTHASE SUBUNIT ALPHA, MITOCHONDRIAL"/>
    <property type="match status" value="1"/>
</dbReference>
<dbReference type="PANTHER" id="PTHR48082:SF2">
    <property type="entry name" value="ATP SYNTHASE SUBUNIT ALPHA, MITOCHONDRIAL"/>
    <property type="match status" value="1"/>
</dbReference>
<dbReference type="Pfam" id="PF00006">
    <property type="entry name" value="ATP-synt_ab"/>
    <property type="match status" value="1"/>
</dbReference>
<dbReference type="Pfam" id="PF00306">
    <property type="entry name" value="ATP-synt_ab_C"/>
    <property type="match status" value="1"/>
</dbReference>
<dbReference type="Pfam" id="PF02874">
    <property type="entry name" value="ATP-synt_ab_N"/>
    <property type="match status" value="1"/>
</dbReference>
<dbReference type="PIRSF" id="PIRSF039088">
    <property type="entry name" value="F_ATPase_subunit_alpha"/>
    <property type="match status" value="1"/>
</dbReference>
<dbReference type="SUPFAM" id="SSF47917">
    <property type="entry name" value="C-terminal domain of alpha and beta subunits of F1 ATP synthase"/>
    <property type="match status" value="1"/>
</dbReference>
<dbReference type="SUPFAM" id="SSF50615">
    <property type="entry name" value="N-terminal domain of alpha and beta subunits of F1 ATP synthase"/>
    <property type="match status" value="1"/>
</dbReference>
<dbReference type="SUPFAM" id="SSF52540">
    <property type="entry name" value="P-loop containing nucleoside triphosphate hydrolases"/>
    <property type="match status" value="1"/>
</dbReference>
<dbReference type="PROSITE" id="PS00152">
    <property type="entry name" value="ATPASE_ALPHA_BETA"/>
    <property type="match status" value="1"/>
</dbReference>
<comment type="function">
    <text>Produces ATP from ADP in the presence of a proton gradient across the membrane. The alpha chain is a regulatory subunit.</text>
</comment>
<comment type="catalytic activity">
    <reaction evidence="2">
        <text>ATP + H2O + 4 H(+)(in) = ADP + phosphate + 5 H(+)(out)</text>
        <dbReference type="Rhea" id="RHEA:57720"/>
        <dbReference type="ChEBI" id="CHEBI:15377"/>
        <dbReference type="ChEBI" id="CHEBI:15378"/>
        <dbReference type="ChEBI" id="CHEBI:30616"/>
        <dbReference type="ChEBI" id="CHEBI:43474"/>
        <dbReference type="ChEBI" id="CHEBI:456216"/>
        <dbReference type="EC" id="7.1.2.2"/>
    </reaction>
</comment>
<comment type="subunit">
    <text evidence="1">F-type ATPases have 2 components, CF(1) - the catalytic core - and CF(0) - the membrane proton channel. CF(1) has five subunits: alpha(3), beta(3), gamma(1), delta(1), epsilon(1). CF(0) has four main subunits: a(1), b(1), b'(1) and c(9-12) (By similarity).</text>
</comment>
<comment type="subcellular location">
    <subcellularLocation>
        <location evidence="2">Cellular thylakoid membrane</location>
        <topology evidence="2">Peripheral membrane protein</topology>
    </subcellularLocation>
</comment>
<comment type="similarity">
    <text evidence="2">Belongs to the ATPase alpha/beta chains family.</text>
</comment>
<accession>Q05372</accession>
<organism>
    <name type="scientific">Synechococcus sp. (strain PCC 6716)</name>
    <dbReference type="NCBI Taxonomy" id="32048"/>
    <lineage>
        <taxon>Bacteria</taxon>
        <taxon>Bacillati</taxon>
        <taxon>Cyanobacteriota</taxon>
        <taxon>Cyanophyceae</taxon>
        <taxon>Synechococcales</taxon>
        <taxon>Synechococcaceae</taxon>
        <taxon>Synechococcus</taxon>
    </lineage>
</organism>
<feature type="initiator methionine" description="Removed" evidence="3">
    <location>
        <position position="1"/>
    </location>
</feature>
<feature type="chain" id="PRO_0000144360" description="ATP synthase subunit alpha">
    <location>
        <begin position="2"/>
        <end position="503"/>
    </location>
</feature>
<feature type="binding site" evidence="2">
    <location>
        <begin position="171"/>
        <end position="178"/>
    </location>
    <ligand>
        <name>ATP</name>
        <dbReference type="ChEBI" id="CHEBI:30616"/>
    </ligand>
</feature>
<feature type="site" description="Required for activity" evidence="2">
    <location>
        <position position="364"/>
    </location>
</feature>